<proteinExistence type="inferred from homology"/>
<name>SYS_MYCMM</name>
<protein>
    <recommendedName>
        <fullName evidence="1">Serine--tRNA ligase</fullName>
        <ecNumber evidence="1">6.1.1.11</ecNumber>
    </recommendedName>
    <alternativeName>
        <fullName evidence="1">Seryl-tRNA synthetase</fullName>
        <shortName evidence="1">SerRS</shortName>
    </alternativeName>
    <alternativeName>
        <fullName evidence="1">Seryl-tRNA(Ser/Sec) synthetase</fullName>
    </alternativeName>
</protein>
<dbReference type="EC" id="6.1.1.11" evidence="1"/>
<dbReference type="EMBL" id="CP000854">
    <property type="protein sequence ID" value="ACC43790.1"/>
    <property type="molecule type" value="Genomic_DNA"/>
</dbReference>
<dbReference type="RefSeq" id="WP_012396887.1">
    <property type="nucleotide sequence ID" value="NC_010612.1"/>
</dbReference>
<dbReference type="SMR" id="B2HMM1"/>
<dbReference type="STRING" id="216594.MMAR_5386"/>
<dbReference type="KEGG" id="mmi:MMAR_5386"/>
<dbReference type="eggNOG" id="COG0172">
    <property type="taxonomic scope" value="Bacteria"/>
</dbReference>
<dbReference type="HOGENOM" id="CLU_023797_0_1_11"/>
<dbReference type="OrthoDB" id="9804647at2"/>
<dbReference type="UniPathway" id="UPA00906">
    <property type="reaction ID" value="UER00895"/>
</dbReference>
<dbReference type="Proteomes" id="UP000001190">
    <property type="component" value="Chromosome"/>
</dbReference>
<dbReference type="GO" id="GO:0005737">
    <property type="term" value="C:cytoplasm"/>
    <property type="evidence" value="ECO:0007669"/>
    <property type="project" value="UniProtKB-SubCell"/>
</dbReference>
<dbReference type="GO" id="GO:0005524">
    <property type="term" value="F:ATP binding"/>
    <property type="evidence" value="ECO:0007669"/>
    <property type="project" value="UniProtKB-UniRule"/>
</dbReference>
<dbReference type="GO" id="GO:0004828">
    <property type="term" value="F:serine-tRNA ligase activity"/>
    <property type="evidence" value="ECO:0007669"/>
    <property type="project" value="UniProtKB-UniRule"/>
</dbReference>
<dbReference type="GO" id="GO:0016260">
    <property type="term" value="P:selenocysteine biosynthetic process"/>
    <property type="evidence" value="ECO:0007669"/>
    <property type="project" value="UniProtKB-UniRule"/>
</dbReference>
<dbReference type="GO" id="GO:0006434">
    <property type="term" value="P:seryl-tRNA aminoacylation"/>
    <property type="evidence" value="ECO:0007669"/>
    <property type="project" value="UniProtKB-UniRule"/>
</dbReference>
<dbReference type="FunFam" id="1.10.287.40:FF:000004">
    <property type="entry name" value="Serine--tRNA ligase"/>
    <property type="match status" value="1"/>
</dbReference>
<dbReference type="FunFam" id="3.30.930.10:FF:000048">
    <property type="entry name" value="Serine--tRNA ligase"/>
    <property type="match status" value="1"/>
</dbReference>
<dbReference type="Gene3D" id="3.30.930.10">
    <property type="entry name" value="Bira Bifunctional Protein, Domain 2"/>
    <property type="match status" value="1"/>
</dbReference>
<dbReference type="Gene3D" id="1.10.287.40">
    <property type="entry name" value="Serine-tRNA synthetase, tRNA binding domain"/>
    <property type="match status" value="1"/>
</dbReference>
<dbReference type="HAMAP" id="MF_00176">
    <property type="entry name" value="Ser_tRNA_synth_type1"/>
    <property type="match status" value="1"/>
</dbReference>
<dbReference type="InterPro" id="IPR002314">
    <property type="entry name" value="aa-tRNA-synt_IIb"/>
</dbReference>
<dbReference type="InterPro" id="IPR006195">
    <property type="entry name" value="aa-tRNA-synth_II"/>
</dbReference>
<dbReference type="InterPro" id="IPR045864">
    <property type="entry name" value="aa-tRNA-synth_II/BPL/LPL"/>
</dbReference>
<dbReference type="InterPro" id="IPR002317">
    <property type="entry name" value="Ser-tRNA-ligase_type_1"/>
</dbReference>
<dbReference type="InterPro" id="IPR015866">
    <property type="entry name" value="Ser-tRNA-synth_1_N"/>
</dbReference>
<dbReference type="InterPro" id="IPR042103">
    <property type="entry name" value="SerRS_1_N_sf"/>
</dbReference>
<dbReference type="InterPro" id="IPR010978">
    <property type="entry name" value="tRNA-bd_arm"/>
</dbReference>
<dbReference type="NCBIfam" id="TIGR00414">
    <property type="entry name" value="serS"/>
    <property type="match status" value="1"/>
</dbReference>
<dbReference type="PANTHER" id="PTHR11778">
    <property type="entry name" value="SERYL-TRNA SYNTHETASE"/>
    <property type="match status" value="1"/>
</dbReference>
<dbReference type="Pfam" id="PF02403">
    <property type="entry name" value="Seryl_tRNA_N"/>
    <property type="match status" value="1"/>
</dbReference>
<dbReference type="Pfam" id="PF00587">
    <property type="entry name" value="tRNA-synt_2b"/>
    <property type="match status" value="1"/>
</dbReference>
<dbReference type="PIRSF" id="PIRSF001529">
    <property type="entry name" value="Ser-tRNA-synth_IIa"/>
    <property type="match status" value="1"/>
</dbReference>
<dbReference type="PRINTS" id="PR00981">
    <property type="entry name" value="TRNASYNTHSER"/>
</dbReference>
<dbReference type="SUPFAM" id="SSF55681">
    <property type="entry name" value="Class II aaRS and biotin synthetases"/>
    <property type="match status" value="1"/>
</dbReference>
<dbReference type="SUPFAM" id="SSF46589">
    <property type="entry name" value="tRNA-binding arm"/>
    <property type="match status" value="1"/>
</dbReference>
<dbReference type="PROSITE" id="PS50862">
    <property type="entry name" value="AA_TRNA_LIGASE_II"/>
    <property type="match status" value="1"/>
</dbReference>
<gene>
    <name evidence="1" type="primary">serS</name>
    <name type="ordered locus">MMAR_5386</name>
</gene>
<reference key="1">
    <citation type="journal article" date="2008" name="Genome Res.">
        <title>Insights from the complete genome sequence of Mycobacterium marinum on the evolution of Mycobacterium tuberculosis.</title>
        <authorList>
            <person name="Stinear T.P."/>
            <person name="Seemann T."/>
            <person name="Harrison P.F."/>
            <person name="Jenkin G.A."/>
            <person name="Davies J.K."/>
            <person name="Johnson P.D."/>
            <person name="Abdellah Z."/>
            <person name="Arrowsmith C."/>
            <person name="Chillingworth T."/>
            <person name="Churcher C."/>
            <person name="Clarke K."/>
            <person name="Cronin A."/>
            <person name="Davis P."/>
            <person name="Goodhead I."/>
            <person name="Holroyd N."/>
            <person name="Jagels K."/>
            <person name="Lord A."/>
            <person name="Moule S."/>
            <person name="Mungall K."/>
            <person name="Norbertczak H."/>
            <person name="Quail M.A."/>
            <person name="Rabbinowitsch E."/>
            <person name="Walker D."/>
            <person name="White B."/>
            <person name="Whitehead S."/>
            <person name="Small P.L."/>
            <person name="Brosch R."/>
            <person name="Ramakrishnan L."/>
            <person name="Fischbach M.A."/>
            <person name="Parkhill J."/>
            <person name="Cole S.T."/>
        </authorList>
    </citation>
    <scope>NUCLEOTIDE SEQUENCE [LARGE SCALE GENOMIC DNA]</scope>
    <source>
        <strain>ATCC BAA-535 / M</strain>
    </source>
</reference>
<evidence type="ECO:0000255" key="1">
    <source>
        <dbReference type="HAMAP-Rule" id="MF_00176"/>
    </source>
</evidence>
<feature type="chain" id="PRO_1000098098" description="Serine--tRNA ligase">
    <location>
        <begin position="1"/>
        <end position="419"/>
    </location>
</feature>
<feature type="binding site" evidence="1">
    <location>
        <begin position="226"/>
        <end position="228"/>
    </location>
    <ligand>
        <name>L-serine</name>
        <dbReference type="ChEBI" id="CHEBI:33384"/>
    </ligand>
</feature>
<feature type="binding site" evidence="1">
    <location>
        <begin position="257"/>
        <end position="259"/>
    </location>
    <ligand>
        <name>ATP</name>
        <dbReference type="ChEBI" id="CHEBI:30616"/>
    </ligand>
</feature>
<feature type="binding site" evidence="1">
    <location>
        <position position="273"/>
    </location>
    <ligand>
        <name>ATP</name>
        <dbReference type="ChEBI" id="CHEBI:30616"/>
    </ligand>
</feature>
<feature type="binding site" evidence="1">
    <location>
        <position position="280"/>
    </location>
    <ligand>
        <name>L-serine</name>
        <dbReference type="ChEBI" id="CHEBI:33384"/>
    </ligand>
</feature>
<feature type="binding site" evidence="1">
    <location>
        <begin position="344"/>
        <end position="347"/>
    </location>
    <ligand>
        <name>ATP</name>
        <dbReference type="ChEBI" id="CHEBI:30616"/>
    </ligand>
</feature>
<feature type="binding site" evidence="1">
    <location>
        <position position="379"/>
    </location>
    <ligand>
        <name>L-serine</name>
        <dbReference type="ChEBI" id="CHEBI:33384"/>
    </ligand>
</feature>
<comment type="function">
    <text evidence="1">Catalyzes the attachment of serine to tRNA(Ser). Is also able to aminoacylate tRNA(Sec) with serine, to form the misacylated tRNA L-seryl-tRNA(Sec), which will be further converted into selenocysteinyl-tRNA(Sec).</text>
</comment>
<comment type="catalytic activity">
    <reaction evidence="1">
        <text>tRNA(Ser) + L-serine + ATP = L-seryl-tRNA(Ser) + AMP + diphosphate + H(+)</text>
        <dbReference type="Rhea" id="RHEA:12292"/>
        <dbReference type="Rhea" id="RHEA-COMP:9669"/>
        <dbReference type="Rhea" id="RHEA-COMP:9703"/>
        <dbReference type="ChEBI" id="CHEBI:15378"/>
        <dbReference type="ChEBI" id="CHEBI:30616"/>
        <dbReference type="ChEBI" id="CHEBI:33019"/>
        <dbReference type="ChEBI" id="CHEBI:33384"/>
        <dbReference type="ChEBI" id="CHEBI:78442"/>
        <dbReference type="ChEBI" id="CHEBI:78533"/>
        <dbReference type="ChEBI" id="CHEBI:456215"/>
        <dbReference type="EC" id="6.1.1.11"/>
    </reaction>
</comment>
<comment type="catalytic activity">
    <reaction evidence="1">
        <text>tRNA(Sec) + L-serine + ATP = L-seryl-tRNA(Sec) + AMP + diphosphate + H(+)</text>
        <dbReference type="Rhea" id="RHEA:42580"/>
        <dbReference type="Rhea" id="RHEA-COMP:9742"/>
        <dbReference type="Rhea" id="RHEA-COMP:10128"/>
        <dbReference type="ChEBI" id="CHEBI:15378"/>
        <dbReference type="ChEBI" id="CHEBI:30616"/>
        <dbReference type="ChEBI" id="CHEBI:33019"/>
        <dbReference type="ChEBI" id="CHEBI:33384"/>
        <dbReference type="ChEBI" id="CHEBI:78442"/>
        <dbReference type="ChEBI" id="CHEBI:78533"/>
        <dbReference type="ChEBI" id="CHEBI:456215"/>
        <dbReference type="EC" id="6.1.1.11"/>
    </reaction>
</comment>
<comment type="pathway">
    <text evidence="1">Aminoacyl-tRNA biosynthesis; selenocysteinyl-tRNA(Sec) biosynthesis; L-seryl-tRNA(Sec) from L-serine and tRNA(Sec): step 1/1.</text>
</comment>
<comment type="subunit">
    <text evidence="1">Homodimer. The tRNA molecule binds across the dimer.</text>
</comment>
<comment type="subcellular location">
    <subcellularLocation>
        <location evidence="1">Cytoplasm</location>
    </subcellularLocation>
</comment>
<comment type="domain">
    <text evidence="1">Consists of two distinct domains, a catalytic core and a N-terminal extension that is involved in tRNA binding.</text>
</comment>
<comment type="similarity">
    <text evidence="1">Belongs to the class-II aminoacyl-tRNA synthetase family. Type-1 seryl-tRNA synthetase subfamily.</text>
</comment>
<organism>
    <name type="scientific">Mycobacterium marinum (strain ATCC BAA-535 / M)</name>
    <dbReference type="NCBI Taxonomy" id="216594"/>
    <lineage>
        <taxon>Bacteria</taxon>
        <taxon>Bacillati</taxon>
        <taxon>Actinomycetota</taxon>
        <taxon>Actinomycetes</taxon>
        <taxon>Mycobacteriales</taxon>
        <taxon>Mycobacteriaceae</taxon>
        <taxon>Mycobacterium</taxon>
        <taxon>Mycobacterium ulcerans group</taxon>
    </lineage>
</organism>
<sequence>MIDLKLLREDPDVVRRSQLSRGEDPALVDALLTADTARRTAISTADSLRAEQKAASKGVGGASPEERPALLQRAKDLAEQVKAAEATQSETEAAFTAAHMAIPNVILDGVPAGGEDDYAVLEVVGEPRAIDNPKDHLELGESLGLIDMARGAKVAGSRFYFLTGQGALLQLGLLQLALRLAVDNGFIPMIPPVLVRPEVMAGTGFLGAHADEVYRLEADDLYLVGTSEVPMAGYHADEIVDLSEGPLRYAGWSSCFRREAGSYGKDTRGIIRVHQFDKVEGFVYCTPADAEAEHQRLLAWQREMLAQIEVPYRVIDVAAGDLGASAARKFDCEAWVPTQGTYRELTSTSNCTTFQARRLATRYRDANGKPQIAATLNGTLGTTRWLVSILENHQQPDGSVRVPAALVGFVGTEVLEPKG</sequence>
<keyword id="KW-0030">Aminoacyl-tRNA synthetase</keyword>
<keyword id="KW-0067">ATP-binding</keyword>
<keyword id="KW-0963">Cytoplasm</keyword>
<keyword id="KW-0436">Ligase</keyword>
<keyword id="KW-0547">Nucleotide-binding</keyword>
<keyword id="KW-0648">Protein biosynthesis</keyword>
<keyword id="KW-1185">Reference proteome</keyword>
<accession>B2HMM1</accession>